<protein>
    <recommendedName>
        <fullName>Actin</fullName>
        <ecNumber evidence="1">3.6.4.-</ecNumber>
    </recommendedName>
</protein>
<dbReference type="EC" id="3.6.4.-" evidence="1"/>
<dbReference type="EMBL" id="X15900">
    <property type="protein sequence ID" value="CAA33907.1"/>
    <property type="molecule type" value="Genomic_DNA"/>
</dbReference>
<dbReference type="PIR" id="S14894">
    <property type="entry name" value="ATJN"/>
</dbReference>
<dbReference type="SMR" id="P13363"/>
<dbReference type="GO" id="GO:0005737">
    <property type="term" value="C:cytoplasm"/>
    <property type="evidence" value="ECO:0007669"/>
    <property type="project" value="UniProtKB-KW"/>
</dbReference>
<dbReference type="GO" id="GO:0005856">
    <property type="term" value="C:cytoskeleton"/>
    <property type="evidence" value="ECO:0007669"/>
    <property type="project" value="UniProtKB-SubCell"/>
</dbReference>
<dbReference type="GO" id="GO:0005524">
    <property type="term" value="F:ATP binding"/>
    <property type="evidence" value="ECO:0007669"/>
    <property type="project" value="UniProtKB-KW"/>
</dbReference>
<dbReference type="GO" id="GO:0016787">
    <property type="term" value="F:hydrolase activity"/>
    <property type="evidence" value="ECO:0007669"/>
    <property type="project" value="UniProtKB-KW"/>
</dbReference>
<dbReference type="CDD" id="cd10224">
    <property type="entry name" value="ASKHA_NBD_actin"/>
    <property type="match status" value="1"/>
</dbReference>
<dbReference type="FunFam" id="2.30.36.70:FF:000001">
    <property type="entry name" value="Actin, alpha skeletal muscle"/>
    <property type="match status" value="1"/>
</dbReference>
<dbReference type="FunFam" id="3.30.420.40:FF:000291">
    <property type="entry name" value="Actin, alpha skeletal muscle"/>
    <property type="match status" value="1"/>
</dbReference>
<dbReference type="FunFam" id="3.90.640.10:FF:000001">
    <property type="entry name" value="Actin, muscle"/>
    <property type="match status" value="1"/>
</dbReference>
<dbReference type="FunFam" id="3.30.420.40:FF:000404">
    <property type="entry name" value="Major actin"/>
    <property type="match status" value="1"/>
</dbReference>
<dbReference type="FunFam" id="3.30.420.40:FF:000058">
    <property type="entry name" value="Putative actin-related protein 5"/>
    <property type="match status" value="1"/>
</dbReference>
<dbReference type="Gene3D" id="3.30.420.40">
    <property type="match status" value="2"/>
</dbReference>
<dbReference type="Gene3D" id="3.90.640.10">
    <property type="entry name" value="Actin, Chain A, domain 4"/>
    <property type="match status" value="1"/>
</dbReference>
<dbReference type="InterPro" id="IPR004000">
    <property type="entry name" value="Actin"/>
</dbReference>
<dbReference type="InterPro" id="IPR020902">
    <property type="entry name" value="Actin/actin-like_CS"/>
</dbReference>
<dbReference type="InterPro" id="IPR004001">
    <property type="entry name" value="Actin_CS"/>
</dbReference>
<dbReference type="InterPro" id="IPR043129">
    <property type="entry name" value="ATPase_NBD"/>
</dbReference>
<dbReference type="PANTHER" id="PTHR11937">
    <property type="entry name" value="ACTIN"/>
    <property type="match status" value="1"/>
</dbReference>
<dbReference type="Pfam" id="PF00022">
    <property type="entry name" value="Actin"/>
    <property type="match status" value="1"/>
</dbReference>
<dbReference type="PRINTS" id="PR00190">
    <property type="entry name" value="ACTIN"/>
</dbReference>
<dbReference type="SMART" id="SM00268">
    <property type="entry name" value="ACTIN"/>
    <property type="match status" value="1"/>
</dbReference>
<dbReference type="SUPFAM" id="SSF53067">
    <property type="entry name" value="Actin-like ATPase domain"/>
    <property type="match status" value="2"/>
</dbReference>
<dbReference type="PROSITE" id="PS00406">
    <property type="entry name" value="ACTINS_1"/>
    <property type="match status" value="1"/>
</dbReference>
<dbReference type="PROSITE" id="PS00432">
    <property type="entry name" value="ACTINS_2"/>
    <property type="match status" value="1"/>
</dbReference>
<dbReference type="PROSITE" id="PS01132">
    <property type="entry name" value="ACTINS_ACT_LIKE"/>
    <property type="match status" value="1"/>
</dbReference>
<evidence type="ECO:0000250" key="1">
    <source>
        <dbReference type="UniProtKB" id="P68137"/>
    </source>
</evidence>
<evidence type="ECO:0000305" key="2"/>
<proteinExistence type="inferred from homology"/>
<accession>P13363</accession>
<sequence>MEDDIQAVVIDNGSGMCKAGFAGDDAPRAVFPSIVGMPKHLGIMVGMNQKDAYIGDEAQAKRGVLTLRYPIEHGIVTNWDDMEKIWSHTFYNELRVAPEEHPVLLTEAPLNPKANRERMTQIMFETFNVPAMYVNIQAVLSLYASGRTTGCVLDSGDGVSHTVPIYEGYALPHAIVRLDLAGRDLTDYMMKILTERGYSFTTTAEREIVRDIKEKLTYVAMNFDEEMEKAARSSTLDKSYELPDGNVIVIGNERFRTPEVLFKPSMIGRECTGVHECAFQTIMKCDVDIRRDLYNNVVLSGGSTMFPGIGDRMTKEMTKLAPTAMKVKIITPPERKYSVWIGGSILASLATFQHMWISKTDYDESGPSIVHRKCF</sequence>
<comment type="function">
    <text>Actins are highly conserved proteins that are involved in various types of cell motility and are ubiquitously expressed in all eukaryotic cells.</text>
</comment>
<comment type="catalytic activity">
    <reaction evidence="1">
        <text>ATP + H2O = ADP + phosphate + H(+)</text>
        <dbReference type="Rhea" id="RHEA:13065"/>
        <dbReference type="ChEBI" id="CHEBI:15377"/>
        <dbReference type="ChEBI" id="CHEBI:15378"/>
        <dbReference type="ChEBI" id="CHEBI:30616"/>
        <dbReference type="ChEBI" id="CHEBI:43474"/>
        <dbReference type="ChEBI" id="CHEBI:456216"/>
    </reaction>
</comment>
<comment type="subcellular location">
    <subcellularLocation>
        <location>Cytoplasm</location>
        <location>Cytoskeleton</location>
    </subcellularLocation>
</comment>
<comment type="similarity">
    <text evidence="2">Belongs to the actin family.</text>
</comment>
<keyword id="KW-0067">ATP-binding</keyword>
<keyword id="KW-0963">Cytoplasm</keyword>
<keyword id="KW-0206">Cytoskeleton</keyword>
<keyword id="KW-0378">Hydrolase</keyword>
<keyword id="KW-0547">Nucleotide-binding</keyword>
<name>ACT_PHYME</name>
<organism>
    <name type="scientific">Phytophthora megasperma</name>
    <name type="common">Potato pink rot fungus</name>
    <dbReference type="NCBI Taxonomy" id="4788"/>
    <lineage>
        <taxon>Eukaryota</taxon>
        <taxon>Sar</taxon>
        <taxon>Stramenopiles</taxon>
        <taxon>Oomycota</taxon>
        <taxon>Peronosporales</taxon>
        <taxon>Peronosporaceae</taxon>
        <taxon>Phytophthora</taxon>
    </lineage>
</organism>
<feature type="chain" id="PRO_0000088987" description="Actin">
    <location>
        <begin position="1"/>
        <end position="375"/>
    </location>
</feature>
<reference key="1">
    <citation type="journal article" date="1990" name="Plant Mol. Biol.">
        <title>The single-copy actin gene of Phytophthora megasperma encodes a protein considerably diverged from any other known actin.</title>
        <authorList>
            <person name="Dudler R."/>
        </authorList>
    </citation>
    <scope>NUCLEOTIDE SEQUENCE [GENOMIC DNA]</scope>
    <source>
        <strain>Glycinea race 1</strain>
    </source>
</reference>